<reference evidence="4" key="1">
    <citation type="journal article" date="2012" name="J. Virol.">
        <title>Complete genome sequences of two Helicobacter pylori bacteriophages isolated from Japanese patients.</title>
        <authorList>
            <person name="Uchiyama J."/>
            <person name="Takeuchi H."/>
            <person name="Kato S."/>
            <person name="Takemura-Uchiyama I."/>
            <person name="Ujihara T."/>
            <person name="Daibata M."/>
            <person name="Matsuzaki S."/>
        </authorList>
    </citation>
    <scope>NUCLEOTIDE SEQUENCE [GENOMIC DNA]</scope>
</reference>
<reference evidence="3" key="2">
    <citation type="journal article" date="2013" name="Appl. Environ. Microbiol.">
        <title>Characterization of Helicobacter pylori bacteriophage KHP30.</title>
        <authorList>
            <person name="Uchiyama J."/>
            <person name="Takeuchi H."/>
            <person name="Kato S."/>
            <person name="Gamoh K."/>
            <person name="Takemura-Uchiyama I."/>
            <person name="Ujihara T."/>
            <person name="Daibata M."/>
            <person name="Matsuzaki S."/>
        </authorList>
    </citation>
    <scope>IDENTIFICATION BY MASS SPECTROMETRY</scope>
</reference>
<gene>
    <name type="ORF">ORF29</name>
</gene>
<protein>
    <recommendedName>
        <fullName evidence="3">Coiled-coil domain-containing protein ORF29</fullName>
    </recommendedName>
</protein>
<evidence type="ECO:0000255" key="1"/>
<evidence type="ECO:0000256" key="2">
    <source>
        <dbReference type="SAM" id="MobiDB-lite"/>
    </source>
</evidence>
<evidence type="ECO:0000305" key="3"/>
<evidence type="ECO:0000312" key="4">
    <source>
        <dbReference type="EMBL" id="BAM34771.1"/>
    </source>
</evidence>
<sequence>MNEKTESEIFEEQNSLYKPIKQEKKTPSTPESEDKNDQSLANANQSLEAEPPYLSTGIGYLDDKIKNRSITAFDYYMAKKFLGLDLSVNLNGNLNIKSENKTRLASINKATQDIFDDLKALDLGDDLIKKAQEHSGITNQVKLWLNYKTGGLKGVDYDLAKTDNARLSYANRVAKTMAQGGQVTQKLRDEAKALTSWGFRSKEENTARATQTQEILLNSLRKNLQMLESLGGSVSPLMLEKLKEHQGKINYINDTGGKIDLKKYQSLAGGN</sequence>
<feature type="chain" id="PRO_0000420438" description="Coiled-coil domain-containing protein ORF29">
    <location>
        <begin position="1"/>
        <end position="271"/>
    </location>
</feature>
<feature type="region of interest" description="Disordered" evidence="2">
    <location>
        <begin position="1"/>
        <end position="39"/>
    </location>
</feature>
<feature type="coiled-coil region" evidence="1">
    <location>
        <begin position="208"/>
        <end position="228"/>
    </location>
</feature>
<feature type="compositionally biased region" description="Basic and acidic residues" evidence="2">
    <location>
        <begin position="20"/>
        <end position="37"/>
    </location>
</feature>
<keyword id="KW-0175">Coiled coil</keyword>
<keyword id="KW-1185">Reference proteome</keyword>
<accession>I7H0I4</accession>
<organismHost>
    <name type="scientific">Helicobacter pylori (strain 35A)</name>
    <dbReference type="NCBI Taxonomy" id="585535"/>
</organismHost>
<organismHost>
    <name type="scientific">Helicobacter pylori (strain F16)</name>
    <dbReference type="NCBI Taxonomy" id="866344"/>
</organismHost>
<organismHost>
    <name type="scientific">Helicobacter pylori (strain F30)</name>
    <dbReference type="NCBI Taxonomy" id="866345"/>
</organismHost>
<organismHost>
    <name type="scientific">Helicobacter pylori (strain F32)</name>
    <dbReference type="NCBI Taxonomy" id="102608"/>
</organismHost>
<organismHost>
    <name type="scientific">Helicobacter pylori (strain F57)</name>
    <dbReference type="NCBI Taxonomy" id="866346"/>
</organismHost>
<dbReference type="EMBL" id="AB647160">
    <property type="protein sequence ID" value="BAM34771.1"/>
    <property type="molecule type" value="Genomic_DNA"/>
</dbReference>
<dbReference type="RefSeq" id="YP_007237649.1">
    <property type="nucleotide sequence ID" value="NC_019928.1"/>
</dbReference>
<dbReference type="SMR" id="I7H0I4"/>
<dbReference type="KEGG" id="vg:14297160"/>
<dbReference type="OrthoDB" id="8814at10239"/>
<dbReference type="Proteomes" id="UP000002900">
    <property type="component" value="Genome"/>
</dbReference>
<proteinExistence type="evidence at protein level"/>
<organism>
    <name type="scientific">Helicobacter pylori bacteriophage KHP30</name>
    <dbReference type="NCBI Taxonomy" id="1208236"/>
    <lineage>
        <taxon>Viruses</taxon>
        <taxon>Duplodnaviria</taxon>
        <taxon>Heunggongvirae</taxon>
        <taxon>Uroviricota</taxon>
        <taxon>Caudoviricetes</taxon>
        <taxon>Schmidvirus</taxon>
        <taxon>Schmidvirus KHP30</taxon>
    </lineage>
</organism>
<name>ORF29_BPKHP</name>